<sequence length="69" mass="7494">MEDDATPAEVVEIMGRTGMTGEATTVKVRVLSGKDQGRIIARNVLGPVKVGDVLMLRETAREARKLSIR</sequence>
<feature type="chain" id="PRO_0000136854" description="Small ribosomal subunit protein eS28">
    <location>
        <begin position="1"/>
        <end position="69"/>
    </location>
</feature>
<organism>
    <name type="scientific">Picrophilus torridus (strain ATCC 700027 / DSM 9790 / JCM 10055 / NBRC 100828 / KAW 2/3)</name>
    <dbReference type="NCBI Taxonomy" id="1122961"/>
    <lineage>
        <taxon>Archaea</taxon>
        <taxon>Methanobacteriati</taxon>
        <taxon>Thermoplasmatota</taxon>
        <taxon>Thermoplasmata</taxon>
        <taxon>Thermoplasmatales</taxon>
        <taxon>Picrophilaceae</taxon>
        <taxon>Picrophilus</taxon>
    </lineage>
</organism>
<evidence type="ECO:0000255" key="1">
    <source>
        <dbReference type="HAMAP-Rule" id="MF_00292"/>
    </source>
</evidence>
<evidence type="ECO:0000305" key="2"/>
<reference key="1">
    <citation type="journal article" date="2004" name="Proc. Natl. Acad. Sci. U.S.A.">
        <title>Genome sequence of Picrophilus torridus and its implications for life around pH 0.</title>
        <authorList>
            <person name="Fuetterer O."/>
            <person name="Angelov A."/>
            <person name="Liesegang H."/>
            <person name="Gottschalk G."/>
            <person name="Schleper C."/>
            <person name="Schepers B."/>
            <person name="Dock C."/>
            <person name="Antranikian G."/>
            <person name="Liebl W."/>
        </authorList>
    </citation>
    <scope>NUCLEOTIDE SEQUENCE [LARGE SCALE GENOMIC DNA]</scope>
    <source>
        <strain>ATCC 700027 / DSM 9790 / JCM 10055 / NBRC 100828 / KAW 2/3</strain>
    </source>
</reference>
<protein>
    <recommendedName>
        <fullName evidence="1">Small ribosomal subunit protein eS28</fullName>
    </recommendedName>
    <alternativeName>
        <fullName evidence="2">30S ribosomal protein S28e</fullName>
    </alternativeName>
</protein>
<accession>Q6KZI6</accession>
<gene>
    <name evidence="1" type="primary">rps28e</name>
    <name type="ordered locus">PTO1281</name>
</gene>
<dbReference type="EMBL" id="AE017261">
    <property type="protein sequence ID" value="AAT43866.1"/>
    <property type="molecule type" value="Genomic_DNA"/>
</dbReference>
<dbReference type="RefSeq" id="WP_011178082.1">
    <property type="nucleotide sequence ID" value="NC_005877.1"/>
</dbReference>
<dbReference type="SMR" id="Q6KZI6"/>
<dbReference type="FunCoup" id="Q6KZI6">
    <property type="interactions" value="155"/>
</dbReference>
<dbReference type="STRING" id="263820.PTO1281"/>
<dbReference type="PaxDb" id="263820-PTO1281"/>
<dbReference type="GeneID" id="2844365"/>
<dbReference type="KEGG" id="pto:PTO1281"/>
<dbReference type="eggNOG" id="arCOG04314">
    <property type="taxonomic scope" value="Archaea"/>
</dbReference>
<dbReference type="HOGENOM" id="CLU_178987_2_1_2"/>
<dbReference type="InParanoid" id="Q6KZI6"/>
<dbReference type="OrthoDB" id="7620at2157"/>
<dbReference type="Proteomes" id="UP000000438">
    <property type="component" value="Chromosome"/>
</dbReference>
<dbReference type="GO" id="GO:0022627">
    <property type="term" value="C:cytosolic small ribosomal subunit"/>
    <property type="evidence" value="ECO:0007669"/>
    <property type="project" value="TreeGrafter"/>
</dbReference>
<dbReference type="GO" id="GO:0003735">
    <property type="term" value="F:structural constituent of ribosome"/>
    <property type="evidence" value="ECO:0007669"/>
    <property type="project" value="InterPro"/>
</dbReference>
<dbReference type="GO" id="GO:0030490">
    <property type="term" value="P:maturation of SSU-rRNA"/>
    <property type="evidence" value="ECO:0007669"/>
    <property type="project" value="TreeGrafter"/>
</dbReference>
<dbReference type="GO" id="GO:0000028">
    <property type="term" value="P:ribosomal small subunit assembly"/>
    <property type="evidence" value="ECO:0007669"/>
    <property type="project" value="TreeGrafter"/>
</dbReference>
<dbReference type="GO" id="GO:0006412">
    <property type="term" value="P:translation"/>
    <property type="evidence" value="ECO:0007669"/>
    <property type="project" value="UniProtKB-UniRule"/>
</dbReference>
<dbReference type="CDD" id="cd04457">
    <property type="entry name" value="S1_S28E"/>
    <property type="match status" value="1"/>
</dbReference>
<dbReference type="FunFam" id="2.40.50.140:FF:000145">
    <property type="entry name" value="30S ribosomal protein S28e"/>
    <property type="match status" value="1"/>
</dbReference>
<dbReference type="Gene3D" id="2.40.50.140">
    <property type="entry name" value="Nucleic acid-binding proteins"/>
    <property type="match status" value="1"/>
</dbReference>
<dbReference type="HAMAP" id="MF_00292">
    <property type="entry name" value="Ribosomal_eS28"/>
    <property type="match status" value="1"/>
</dbReference>
<dbReference type="InterPro" id="IPR012340">
    <property type="entry name" value="NA-bd_OB-fold"/>
</dbReference>
<dbReference type="InterPro" id="IPR000289">
    <property type="entry name" value="Ribosomal_eS28"/>
</dbReference>
<dbReference type="InterPro" id="IPR028626">
    <property type="entry name" value="Ribosomal_eS28_CS"/>
</dbReference>
<dbReference type="NCBIfam" id="NF003080">
    <property type="entry name" value="PRK04007.1"/>
    <property type="match status" value="1"/>
</dbReference>
<dbReference type="PANTHER" id="PTHR10769">
    <property type="entry name" value="40S RIBOSOMAL PROTEIN S28"/>
    <property type="match status" value="1"/>
</dbReference>
<dbReference type="PANTHER" id="PTHR10769:SF3">
    <property type="entry name" value="SMALL RIBOSOMAL SUBUNIT PROTEIN ES28"/>
    <property type="match status" value="1"/>
</dbReference>
<dbReference type="Pfam" id="PF01200">
    <property type="entry name" value="Ribosomal_S28e"/>
    <property type="match status" value="1"/>
</dbReference>
<dbReference type="SUPFAM" id="SSF50249">
    <property type="entry name" value="Nucleic acid-binding proteins"/>
    <property type="match status" value="1"/>
</dbReference>
<dbReference type="PROSITE" id="PS00961">
    <property type="entry name" value="RIBOSOMAL_S28E"/>
    <property type="match status" value="1"/>
</dbReference>
<comment type="similarity">
    <text evidence="1">Belongs to the eukaryotic ribosomal protein eS28 family.</text>
</comment>
<keyword id="KW-0687">Ribonucleoprotein</keyword>
<keyword id="KW-0689">Ribosomal protein</keyword>
<proteinExistence type="inferred from homology"/>
<name>RS28_PICTO</name>